<name>TRMB_DEBHA</name>
<reference key="1">
    <citation type="journal article" date="2004" name="Nature">
        <title>Genome evolution in yeasts.</title>
        <authorList>
            <person name="Dujon B."/>
            <person name="Sherman D."/>
            <person name="Fischer G."/>
            <person name="Durrens P."/>
            <person name="Casaregola S."/>
            <person name="Lafontaine I."/>
            <person name="de Montigny J."/>
            <person name="Marck C."/>
            <person name="Neuveglise C."/>
            <person name="Talla E."/>
            <person name="Goffard N."/>
            <person name="Frangeul L."/>
            <person name="Aigle M."/>
            <person name="Anthouard V."/>
            <person name="Babour A."/>
            <person name="Barbe V."/>
            <person name="Barnay S."/>
            <person name="Blanchin S."/>
            <person name="Beckerich J.-M."/>
            <person name="Beyne E."/>
            <person name="Bleykasten C."/>
            <person name="Boisrame A."/>
            <person name="Boyer J."/>
            <person name="Cattolico L."/>
            <person name="Confanioleri F."/>
            <person name="de Daruvar A."/>
            <person name="Despons L."/>
            <person name="Fabre E."/>
            <person name="Fairhead C."/>
            <person name="Ferry-Dumazet H."/>
            <person name="Groppi A."/>
            <person name="Hantraye F."/>
            <person name="Hennequin C."/>
            <person name="Jauniaux N."/>
            <person name="Joyet P."/>
            <person name="Kachouri R."/>
            <person name="Kerrest A."/>
            <person name="Koszul R."/>
            <person name="Lemaire M."/>
            <person name="Lesur I."/>
            <person name="Ma L."/>
            <person name="Muller H."/>
            <person name="Nicaud J.-M."/>
            <person name="Nikolski M."/>
            <person name="Oztas S."/>
            <person name="Ozier-Kalogeropoulos O."/>
            <person name="Pellenz S."/>
            <person name="Potier S."/>
            <person name="Richard G.-F."/>
            <person name="Straub M.-L."/>
            <person name="Suleau A."/>
            <person name="Swennen D."/>
            <person name="Tekaia F."/>
            <person name="Wesolowski-Louvel M."/>
            <person name="Westhof E."/>
            <person name="Wirth B."/>
            <person name="Zeniou-Meyer M."/>
            <person name="Zivanovic Y."/>
            <person name="Bolotin-Fukuhara M."/>
            <person name="Thierry A."/>
            <person name="Bouchier C."/>
            <person name="Caudron B."/>
            <person name="Scarpelli C."/>
            <person name="Gaillardin C."/>
            <person name="Weissenbach J."/>
            <person name="Wincker P."/>
            <person name="Souciet J.-L."/>
        </authorList>
    </citation>
    <scope>NUCLEOTIDE SEQUENCE [LARGE SCALE GENOMIC DNA]</scope>
    <source>
        <strain>ATCC 36239 / CBS 767 / BCRC 21394 / JCM 1990 / NBRC 0083 / IGC 2968</strain>
    </source>
</reference>
<feature type="chain" id="PRO_0000370595" description="tRNA (guanine-N(7)-)-methyltransferase">
    <location>
        <begin position="1"/>
        <end position="292"/>
    </location>
</feature>
<feature type="region of interest" description="Disordered" evidence="2">
    <location>
        <begin position="1"/>
        <end position="52"/>
    </location>
</feature>
<feature type="active site" evidence="1">
    <location>
        <position position="189"/>
    </location>
</feature>
<feature type="binding site" evidence="1">
    <location>
        <position position="106"/>
    </location>
    <ligand>
        <name>S-adenosyl-L-methionine</name>
        <dbReference type="ChEBI" id="CHEBI:59789"/>
    </ligand>
</feature>
<feature type="binding site" evidence="1">
    <location>
        <begin position="129"/>
        <end position="130"/>
    </location>
    <ligand>
        <name>S-adenosyl-L-methionine</name>
        <dbReference type="ChEBI" id="CHEBI:59789"/>
    </ligand>
</feature>
<feature type="binding site" evidence="1">
    <location>
        <begin position="166"/>
        <end position="167"/>
    </location>
    <ligand>
        <name>S-adenosyl-L-methionine</name>
        <dbReference type="ChEBI" id="CHEBI:59789"/>
    </ligand>
</feature>
<feature type="binding site" evidence="1">
    <location>
        <position position="186"/>
    </location>
    <ligand>
        <name>S-adenosyl-L-methionine</name>
        <dbReference type="ChEBI" id="CHEBI:59789"/>
    </ligand>
</feature>
<feature type="binding site" evidence="1">
    <location>
        <begin position="264"/>
        <end position="266"/>
    </location>
    <ligand>
        <name>S-adenosyl-L-methionine</name>
        <dbReference type="ChEBI" id="CHEBI:59789"/>
    </ligand>
</feature>
<keyword id="KW-0489">Methyltransferase</keyword>
<keyword id="KW-0539">Nucleus</keyword>
<keyword id="KW-1185">Reference proteome</keyword>
<keyword id="KW-0694">RNA-binding</keyword>
<keyword id="KW-0949">S-adenosyl-L-methionine</keyword>
<keyword id="KW-0808">Transferase</keyword>
<keyword id="KW-0819">tRNA processing</keyword>
<keyword id="KW-0820">tRNA-binding</keyword>
<dbReference type="EC" id="2.1.1.33" evidence="1"/>
<dbReference type="EMBL" id="CR382134">
    <property type="protein sequence ID" value="CAG85186.2"/>
    <property type="molecule type" value="Genomic_DNA"/>
</dbReference>
<dbReference type="RefSeq" id="XP_457191.2">
    <property type="nucleotide sequence ID" value="XM_457191.1"/>
</dbReference>
<dbReference type="SMR" id="Q6BX78"/>
<dbReference type="FunCoup" id="Q6BX78">
    <property type="interactions" value="565"/>
</dbReference>
<dbReference type="STRING" id="284592.Q6BX78"/>
<dbReference type="GeneID" id="2913004"/>
<dbReference type="KEGG" id="dha:DEHA2B05258g"/>
<dbReference type="VEuPathDB" id="FungiDB:DEHA2B05258g"/>
<dbReference type="eggNOG" id="KOG3115">
    <property type="taxonomic scope" value="Eukaryota"/>
</dbReference>
<dbReference type="HOGENOM" id="CLU_050910_3_1_1"/>
<dbReference type="InParanoid" id="Q6BX78"/>
<dbReference type="OMA" id="LPNYFAK"/>
<dbReference type="OrthoDB" id="47276at2759"/>
<dbReference type="UniPathway" id="UPA00989"/>
<dbReference type="Proteomes" id="UP000000599">
    <property type="component" value="Chromosome B"/>
</dbReference>
<dbReference type="GO" id="GO:0005634">
    <property type="term" value="C:nucleus"/>
    <property type="evidence" value="ECO:0007669"/>
    <property type="project" value="UniProtKB-SubCell"/>
</dbReference>
<dbReference type="GO" id="GO:0106143">
    <property type="term" value="C:tRNA (m7G46) methyltransferase complex"/>
    <property type="evidence" value="ECO:0007669"/>
    <property type="project" value="EnsemblFungi"/>
</dbReference>
<dbReference type="GO" id="GO:0008176">
    <property type="term" value="F:tRNA (guanine(46)-N7)-methyltransferase activity"/>
    <property type="evidence" value="ECO:0007669"/>
    <property type="project" value="UniProtKB-UniRule"/>
</dbReference>
<dbReference type="GO" id="GO:0000049">
    <property type="term" value="F:tRNA binding"/>
    <property type="evidence" value="ECO:0007669"/>
    <property type="project" value="UniProtKB-UniRule"/>
</dbReference>
<dbReference type="CDD" id="cd02440">
    <property type="entry name" value="AdoMet_MTases"/>
    <property type="match status" value="1"/>
</dbReference>
<dbReference type="FunFam" id="3.40.50.150:FF:000060">
    <property type="entry name" value="tRNA (guanine-N(7)-)-methyltransferase"/>
    <property type="match status" value="1"/>
</dbReference>
<dbReference type="Gene3D" id="3.40.50.150">
    <property type="entry name" value="Vaccinia Virus protein VP39"/>
    <property type="match status" value="1"/>
</dbReference>
<dbReference type="HAMAP" id="MF_03055">
    <property type="entry name" value="tRNA_methyltr_TrmB_euk"/>
    <property type="match status" value="1"/>
</dbReference>
<dbReference type="InterPro" id="IPR029063">
    <property type="entry name" value="SAM-dependent_MTases_sf"/>
</dbReference>
<dbReference type="InterPro" id="IPR025763">
    <property type="entry name" value="Trm8_euk"/>
</dbReference>
<dbReference type="InterPro" id="IPR003358">
    <property type="entry name" value="tRNA_(Gua-N-7)_MeTrfase_Trmb"/>
</dbReference>
<dbReference type="NCBIfam" id="TIGR00091">
    <property type="entry name" value="tRNA (guanosine(46)-N7)-methyltransferase TrmB"/>
    <property type="match status" value="1"/>
</dbReference>
<dbReference type="PANTHER" id="PTHR23417">
    <property type="entry name" value="3-DEOXY-D-MANNO-OCTULOSONIC-ACID TRANSFERASE/TRNA GUANINE-N 7 - -METHYLTRANSFERASE"/>
    <property type="match status" value="1"/>
</dbReference>
<dbReference type="PANTHER" id="PTHR23417:SF16">
    <property type="entry name" value="TRNA (GUANINE-N(7)-)-METHYLTRANSFERASE"/>
    <property type="match status" value="1"/>
</dbReference>
<dbReference type="Pfam" id="PF02390">
    <property type="entry name" value="Methyltransf_4"/>
    <property type="match status" value="1"/>
</dbReference>
<dbReference type="SUPFAM" id="SSF53335">
    <property type="entry name" value="S-adenosyl-L-methionine-dependent methyltransferases"/>
    <property type="match status" value="1"/>
</dbReference>
<dbReference type="PROSITE" id="PS51625">
    <property type="entry name" value="SAM_MT_TRMB"/>
    <property type="match status" value="1"/>
</dbReference>
<sequence length="292" mass="34725">MGKIEATSKEEKLRVQKEAEARRRAYRDLKKEARQMQKEVKFDTDDNSELPKKRFYRQRAHSNPFSDHRLEYPRSPDTMDWSKFYPQYYDSESKKMTSEVEIADIGCGYGGLLINLAPEFPDKLLLGMEIRVQVTQYVEDRIIALRNQYRNELQNNYQNISVLRGNAMKFLPNFFHKAQLSKMFFCFPDPHFKQRKHKARIITNTLLAEYAYVLKEGGIIYTITDVEDLHNWMVKHLEEHPMFERLSKEWEKQDKCVSIMWNSTEEGKKVTRNKGSKWVACFKRLPTPDDCE</sequence>
<organism>
    <name type="scientific">Debaryomyces hansenii (strain ATCC 36239 / CBS 767 / BCRC 21394 / JCM 1990 / NBRC 0083 / IGC 2968)</name>
    <name type="common">Yeast</name>
    <name type="synonym">Torulaspora hansenii</name>
    <dbReference type="NCBI Taxonomy" id="284592"/>
    <lineage>
        <taxon>Eukaryota</taxon>
        <taxon>Fungi</taxon>
        <taxon>Dikarya</taxon>
        <taxon>Ascomycota</taxon>
        <taxon>Saccharomycotina</taxon>
        <taxon>Pichiomycetes</taxon>
        <taxon>Debaryomycetaceae</taxon>
        <taxon>Debaryomyces</taxon>
    </lineage>
</organism>
<gene>
    <name evidence="1" type="primary">TRM8</name>
    <name type="ordered locus">DEHA2B05258g</name>
</gene>
<comment type="function">
    <text evidence="1">Catalyzes the formation of N(7)-methylguanine at position 46 (m7G46) in tRNA.</text>
</comment>
<comment type="catalytic activity">
    <reaction evidence="1">
        <text>guanosine(46) in tRNA + S-adenosyl-L-methionine = N(7)-methylguanosine(46) in tRNA + S-adenosyl-L-homocysteine</text>
        <dbReference type="Rhea" id="RHEA:42708"/>
        <dbReference type="Rhea" id="RHEA-COMP:10188"/>
        <dbReference type="Rhea" id="RHEA-COMP:10189"/>
        <dbReference type="ChEBI" id="CHEBI:57856"/>
        <dbReference type="ChEBI" id="CHEBI:59789"/>
        <dbReference type="ChEBI" id="CHEBI:74269"/>
        <dbReference type="ChEBI" id="CHEBI:74480"/>
        <dbReference type="EC" id="2.1.1.33"/>
    </reaction>
</comment>
<comment type="pathway">
    <text evidence="1">tRNA modification; N(7)-methylguanine-tRNA biosynthesis.</text>
</comment>
<comment type="subunit">
    <text evidence="1">Forms a complex with TRM82.</text>
</comment>
<comment type="subcellular location">
    <subcellularLocation>
        <location evidence="1">Nucleus</location>
    </subcellularLocation>
</comment>
<comment type="similarity">
    <text evidence="1">Belongs to the class I-like SAM-binding methyltransferase superfamily. TrmB family.</text>
</comment>
<protein>
    <recommendedName>
        <fullName evidence="1">tRNA (guanine-N(7)-)-methyltransferase</fullName>
        <ecNumber evidence="1">2.1.1.33</ecNumber>
    </recommendedName>
    <alternativeName>
        <fullName evidence="1">Transfer RNA methyltransferase 8</fullName>
    </alternativeName>
    <alternativeName>
        <fullName evidence="1">tRNA (guanine(46)-N(7))-methyltransferase</fullName>
    </alternativeName>
    <alternativeName>
        <fullName evidence="1">tRNA(m7G46)-methyltransferase</fullName>
    </alternativeName>
</protein>
<accession>Q6BX78</accession>
<evidence type="ECO:0000255" key="1">
    <source>
        <dbReference type="HAMAP-Rule" id="MF_03055"/>
    </source>
</evidence>
<evidence type="ECO:0000256" key="2">
    <source>
        <dbReference type="SAM" id="MobiDB-lite"/>
    </source>
</evidence>
<proteinExistence type="inferred from homology"/>